<organism>
    <name type="scientific">Danio rerio</name>
    <name type="common">Zebrafish</name>
    <name type="synonym">Brachydanio rerio</name>
    <dbReference type="NCBI Taxonomy" id="7955"/>
    <lineage>
        <taxon>Eukaryota</taxon>
        <taxon>Metazoa</taxon>
        <taxon>Chordata</taxon>
        <taxon>Craniata</taxon>
        <taxon>Vertebrata</taxon>
        <taxon>Euteleostomi</taxon>
        <taxon>Actinopterygii</taxon>
        <taxon>Neopterygii</taxon>
        <taxon>Teleostei</taxon>
        <taxon>Ostariophysi</taxon>
        <taxon>Cypriniformes</taxon>
        <taxon>Danionidae</taxon>
        <taxon>Danioninae</taxon>
        <taxon>Danio</taxon>
    </lineage>
</organism>
<evidence type="ECO:0000255" key="1">
    <source>
        <dbReference type="HAMAP-Rule" id="MF_03153"/>
    </source>
</evidence>
<evidence type="ECO:0000256" key="2">
    <source>
        <dbReference type="SAM" id="MobiDB-lite"/>
    </source>
</evidence>
<evidence type="ECO:0000269" key="3">
    <source>
    </source>
</evidence>
<evidence type="ECO:0000269" key="4">
    <source>
    </source>
</evidence>
<proteinExistence type="evidence at transcript level"/>
<sequence length="159" mass="17286">MPKFYCDYCDTYLTHDSPSVRKTHCSGRKHKENVKDYYQKWMEEQAQSLIDKTTAAFQQGKIPPTPFPGAPPPGGSLLPHPSIGGPPRPGMLPAPPMGGPPMMPMMGPPPHAMMPGGPGPGMRPPMGGPMQMMPGPHMMRPPARPMMPAVRPGMVRPDR</sequence>
<feature type="chain" id="PRO_0000414254" description="U1 small nuclear ribonucleoprotein C">
    <location>
        <begin position="1"/>
        <end position="159"/>
    </location>
</feature>
<feature type="zinc finger region" description="Matrin-type" evidence="1">
    <location>
        <begin position="4"/>
        <end position="36"/>
    </location>
</feature>
<feature type="region of interest" description="Disordered" evidence="2">
    <location>
        <begin position="61"/>
        <end position="99"/>
    </location>
</feature>
<feature type="compositionally biased region" description="Pro residues" evidence="2">
    <location>
        <begin position="63"/>
        <end position="74"/>
    </location>
</feature>
<feature type="compositionally biased region" description="Pro residues" evidence="2">
    <location>
        <begin position="84"/>
        <end position="99"/>
    </location>
</feature>
<accession>Q8JGS0</accession>
<comment type="function">
    <text evidence="1 3 4">Component of the spliceosomal U1 snRNP, which is essential for recognition of the pre-mRNA 5' splice-site and the subsequent assembly of the spliceosome. snrpc/U1-C is directly involved in initial 5' splice-site recognition for both constitutive and regulated alternative splicing. The interaction with the 5' splice-site seems to precede base-pairing between the pre-mRNA and the U1 snRNA. Stimulates commitment or early (E) complex formation by stabilizing the base pairing of the 5' end of the U1 snRNA and the 5' splice-site region.</text>
</comment>
<comment type="subunit">
    <text evidence="1">Component of the U1 snRNP. The U1 snRNP is composed of the U1 snRNA and the 7 core Sm proteins snrpb, snrpd1, snrpd2, snrpd3, snrpe, snrpf and snrpg that assemble in a heptameric protein ring on the Sm site of the small nuclear RNA to form the core snRNP, and at least 3 U1 snRNP-specific proteins snrnp70/U1-70K, snrpa/U1-A and snrpc/U1-C. snrpc/U1-C interacts with U1 snRNA and the 5' splice-site region of the pre-mRNA.</text>
</comment>
<comment type="subcellular location">
    <subcellularLocation>
        <location evidence="1">Nucleus</location>
    </subcellularLocation>
</comment>
<comment type="disruption phenotype">
    <text evidence="4">Still contains stable, but U1-C-deficient U1 snRNPs. Changes the alternative splicing patterns of a large set of specific target genes. Results in an early embryonic lethality at about 5 days post-fertilization.</text>
</comment>
<comment type="similarity">
    <text evidence="1">Belongs to the U1 small nuclear ribonucleoprotein C family.</text>
</comment>
<reference key="1">
    <citation type="journal article" date="2002" name="Nat. Genet.">
        <title>Insertional mutagenesis in zebrafish rapidly identifies genes essential for early vertebrate development.</title>
        <authorList>
            <person name="Golling G."/>
            <person name="Amsterdam A."/>
            <person name="Sun Z."/>
            <person name="Antonelli M."/>
            <person name="Maldonado E."/>
            <person name="Chen W."/>
            <person name="Burgess S."/>
            <person name="Haldi M."/>
            <person name="Artzt K."/>
            <person name="Farrington S."/>
            <person name="Lin S.-Y."/>
            <person name="Nissen R.M."/>
            <person name="Hopkins N."/>
        </authorList>
    </citation>
    <scope>NUCLEOTIDE SEQUENCE [LARGE SCALE MRNA]</scope>
    <scope>FUNCTION</scope>
    <source>
        <tissue>Embryo</tissue>
    </source>
</reference>
<reference key="2">
    <citation type="journal article" date="2013" name="Nature">
        <title>The zebrafish reference genome sequence and its relationship to the human genome.</title>
        <authorList>
            <person name="Howe K."/>
            <person name="Clark M.D."/>
            <person name="Torroja C.F."/>
            <person name="Torrance J."/>
            <person name="Berthelot C."/>
            <person name="Muffato M."/>
            <person name="Collins J.E."/>
            <person name="Humphray S."/>
            <person name="McLaren K."/>
            <person name="Matthews L."/>
            <person name="McLaren S."/>
            <person name="Sealy I."/>
            <person name="Caccamo M."/>
            <person name="Churcher C."/>
            <person name="Scott C."/>
            <person name="Barrett J.C."/>
            <person name="Koch R."/>
            <person name="Rauch G.J."/>
            <person name="White S."/>
            <person name="Chow W."/>
            <person name="Kilian B."/>
            <person name="Quintais L.T."/>
            <person name="Guerra-Assuncao J.A."/>
            <person name="Zhou Y."/>
            <person name="Gu Y."/>
            <person name="Yen J."/>
            <person name="Vogel J.H."/>
            <person name="Eyre T."/>
            <person name="Redmond S."/>
            <person name="Banerjee R."/>
            <person name="Chi J."/>
            <person name="Fu B."/>
            <person name="Langley E."/>
            <person name="Maguire S.F."/>
            <person name="Laird G.K."/>
            <person name="Lloyd D."/>
            <person name="Kenyon E."/>
            <person name="Donaldson S."/>
            <person name="Sehra H."/>
            <person name="Almeida-King J."/>
            <person name="Loveland J."/>
            <person name="Trevanion S."/>
            <person name="Jones M."/>
            <person name="Quail M."/>
            <person name="Willey D."/>
            <person name="Hunt A."/>
            <person name="Burton J."/>
            <person name="Sims S."/>
            <person name="McLay K."/>
            <person name="Plumb B."/>
            <person name="Davis J."/>
            <person name="Clee C."/>
            <person name="Oliver K."/>
            <person name="Clark R."/>
            <person name="Riddle C."/>
            <person name="Elliot D."/>
            <person name="Threadgold G."/>
            <person name="Harden G."/>
            <person name="Ware D."/>
            <person name="Begum S."/>
            <person name="Mortimore B."/>
            <person name="Kerry G."/>
            <person name="Heath P."/>
            <person name="Phillimore B."/>
            <person name="Tracey A."/>
            <person name="Corby N."/>
            <person name="Dunn M."/>
            <person name="Johnson C."/>
            <person name="Wood J."/>
            <person name="Clark S."/>
            <person name="Pelan S."/>
            <person name="Griffiths G."/>
            <person name="Smith M."/>
            <person name="Glithero R."/>
            <person name="Howden P."/>
            <person name="Barker N."/>
            <person name="Lloyd C."/>
            <person name="Stevens C."/>
            <person name="Harley J."/>
            <person name="Holt K."/>
            <person name="Panagiotidis G."/>
            <person name="Lovell J."/>
            <person name="Beasley H."/>
            <person name="Henderson C."/>
            <person name="Gordon D."/>
            <person name="Auger K."/>
            <person name="Wright D."/>
            <person name="Collins J."/>
            <person name="Raisen C."/>
            <person name="Dyer L."/>
            <person name="Leung K."/>
            <person name="Robertson L."/>
            <person name="Ambridge K."/>
            <person name="Leongamornlert D."/>
            <person name="McGuire S."/>
            <person name="Gilderthorp R."/>
            <person name="Griffiths C."/>
            <person name="Manthravadi D."/>
            <person name="Nichol S."/>
            <person name="Barker G."/>
            <person name="Whitehead S."/>
            <person name="Kay M."/>
            <person name="Brown J."/>
            <person name="Murnane C."/>
            <person name="Gray E."/>
            <person name="Humphries M."/>
            <person name="Sycamore N."/>
            <person name="Barker D."/>
            <person name="Saunders D."/>
            <person name="Wallis J."/>
            <person name="Babbage A."/>
            <person name="Hammond S."/>
            <person name="Mashreghi-Mohammadi M."/>
            <person name="Barr L."/>
            <person name="Martin S."/>
            <person name="Wray P."/>
            <person name="Ellington A."/>
            <person name="Matthews N."/>
            <person name="Ellwood M."/>
            <person name="Woodmansey R."/>
            <person name="Clark G."/>
            <person name="Cooper J."/>
            <person name="Tromans A."/>
            <person name="Grafham D."/>
            <person name="Skuce C."/>
            <person name="Pandian R."/>
            <person name="Andrews R."/>
            <person name="Harrison E."/>
            <person name="Kimberley A."/>
            <person name="Garnett J."/>
            <person name="Fosker N."/>
            <person name="Hall R."/>
            <person name="Garner P."/>
            <person name="Kelly D."/>
            <person name="Bird C."/>
            <person name="Palmer S."/>
            <person name="Gehring I."/>
            <person name="Berger A."/>
            <person name="Dooley C.M."/>
            <person name="Ersan-Urun Z."/>
            <person name="Eser C."/>
            <person name="Geiger H."/>
            <person name="Geisler M."/>
            <person name="Karotki L."/>
            <person name="Kirn A."/>
            <person name="Konantz J."/>
            <person name="Konantz M."/>
            <person name="Oberlander M."/>
            <person name="Rudolph-Geiger S."/>
            <person name="Teucke M."/>
            <person name="Lanz C."/>
            <person name="Raddatz G."/>
            <person name="Osoegawa K."/>
            <person name="Zhu B."/>
            <person name="Rapp A."/>
            <person name="Widaa S."/>
            <person name="Langford C."/>
            <person name="Yang F."/>
            <person name="Schuster S.C."/>
            <person name="Carter N.P."/>
            <person name="Harrow J."/>
            <person name="Ning Z."/>
            <person name="Herrero J."/>
            <person name="Searle S.M."/>
            <person name="Enright A."/>
            <person name="Geisler R."/>
            <person name="Plasterk R.H."/>
            <person name="Lee C."/>
            <person name="Westerfield M."/>
            <person name="de Jong P.J."/>
            <person name="Zon L.I."/>
            <person name="Postlethwait J.H."/>
            <person name="Nusslein-Volhard C."/>
            <person name="Hubbard T.J."/>
            <person name="Roest Crollius H."/>
            <person name="Rogers J."/>
            <person name="Stemple D.L."/>
        </authorList>
    </citation>
    <scope>NUCLEOTIDE SEQUENCE [LARGE SCALE GENOMIC DNA]</scope>
    <source>
        <strain>Tuebingen</strain>
    </source>
</reference>
<reference key="3">
    <citation type="submission" date="2005-03" db="EMBL/GenBank/DDBJ databases">
        <authorList>
            <consortium name="NIH - Zebrafish Gene Collection (ZGC) project"/>
        </authorList>
    </citation>
    <scope>NUCLEOTIDE SEQUENCE [LARGE SCALE MRNA]</scope>
</reference>
<reference key="4">
    <citation type="journal article" date="2011" name="EMBO J.">
        <title>RNA-Seq analysis in mutant zebrafish reveals role of U1C protein in alternative splicing regulation.</title>
        <authorList>
            <person name="Roesel T.D."/>
            <person name="Hung L.-H."/>
            <person name="Medenbach J."/>
            <person name="Donde K."/>
            <person name="Starke S."/>
            <person name="Benes V."/>
            <person name="Raetsch G."/>
            <person name="Bindereif A."/>
        </authorList>
    </citation>
    <scope>FUNCTION</scope>
    <scope>DISRUPTION PHENOTYPE</scope>
</reference>
<keyword id="KW-0479">Metal-binding</keyword>
<keyword id="KW-0539">Nucleus</keyword>
<keyword id="KW-1185">Reference proteome</keyword>
<keyword id="KW-0687">Ribonucleoprotein</keyword>
<keyword id="KW-0694">RNA-binding</keyword>
<keyword id="KW-0862">Zinc</keyword>
<keyword id="KW-0863">Zinc-finger</keyword>
<dbReference type="EMBL" id="AY099526">
    <property type="protein sequence ID" value="AAM28214.1"/>
    <property type="molecule type" value="mRNA"/>
</dbReference>
<dbReference type="EMBL" id="CR847944">
    <property type="status" value="NOT_ANNOTATED_CDS"/>
    <property type="molecule type" value="Genomic_DNA"/>
</dbReference>
<dbReference type="EMBL" id="BC091442">
    <property type="protein sequence ID" value="AAH91442.1"/>
    <property type="molecule type" value="mRNA"/>
</dbReference>
<dbReference type="RefSeq" id="NP_775358.1">
    <property type="nucleotide sequence ID" value="NM_173251.2"/>
</dbReference>
<dbReference type="SMR" id="Q8JGS0"/>
<dbReference type="BioGRID" id="79730">
    <property type="interactions" value="1"/>
</dbReference>
<dbReference type="FunCoup" id="Q8JGS0">
    <property type="interactions" value="10"/>
</dbReference>
<dbReference type="STRING" id="7955.ENSDARP00000010253"/>
<dbReference type="PaxDb" id="7955-ENSDARP00000010253"/>
<dbReference type="Ensembl" id="ENSDART00000017230">
    <property type="protein sequence ID" value="ENSDARP00000010253"/>
    <property type="gene ID" value="ENSDARG00000009871"/>
</dbReference>
<dbReference type="GeneID" id="192330"/>
<dbReference type="KEGG" id="dre:192330"/>
<dbReference type="AGR" id="ZFIN:ZDB-GENE-020419-26"/>
<dbReference type="CTD" id="6631"/>
<dbReference type="ZFIN" id="ZDB-GENE-020419-26">
    <property type="gene designation" value="snrpc"/>
</dbReference>
<dbReference type="eggNOG" id="KOG3454">
    <property type="taxonomic scope" value="Eukaryota"/>
</dbReference>
<dbReference type="HOGENOM" id="CLU_079697_3_0_1"/>
<dbReference type="InParanoid" id="Q8JGS0"/>
<dbReference type="OMA" id="QMRPPLM"/>
<dbReference type="OrthoDB" id="76567at2759"/>
<dbReference type="TreeFam" id="TF313578"/>
<dbReference type="PRO" id="PR:Q8JGS0"/>
<dbReference type="Proteomes" id="UP000000437">
    <property type="component" value="Chromosome 6"/>
</dbReference>
<dbReference type="Bgee" id="ENSDARG00000009871">
    <property type="expression patterns" value="Expressed in mature ovarian follicle and 28 other cell types or tissues"/>
</dbReference>
<dbReference type="ExpressionAtlas" id="Q8JGS0">
    <property type="expression patterns" value="baseline and differential"/>
</dbReference>
<dbReference type="GO" id="GO:0000243">
    <property type="term" value="C:commitment complex"/>
    <property type="evidence" value="ECO:0007669"/>
    <property type="project" value="UniProtKB-UniRule"/>
</dbReference>
<dbReference type="GO" id="GO:0005685">
    <property type="term" value="C:U1 snRNP"/>
    <property type="evidence" value="ECO:0000250"/>
    <property type="project" value="UniProtKB"/>
</dbReference>
<dbReference type="GO" id="GO:0071004">
    <property type="term" value="C:U2-type prespliceosome"/>
    <property type="evidence" value="ECO:0007669"/>
    <property type="project" value="UniProtKB-UniRule"/>
</dbReference>
<dbReference type="GO" id="GO:0003729">
    <property type="term" value="F:mRNA binding"/>
    <property type="evidence" value="ECO:0007669"/>
    <property type="project" value="UniProtKB-UniRule"/>
</dbReference>
<dbReference type="GO" id="GO:0030627">
    <property type="term" value="F:pre-mRNA 5'-splice site binding"/>
    <property type="evidence" value="ECO:0000318"/>
    <property type="project" value="GO_Central"/>
</dbReference>
<dbReference type="GO" id="GO:0030619">
    <property type="term" value="F:U1 snRNA binding"/>
    <property type="evidence" value="ECO:0007669"/>
    <property type="project" value="UniProtKB-UniRule"/>
</dbReference>
<dbReference type="GO" id="GO:0008270">
    <property type="term" value="F:zinc ion binding"/>
    <property type="evidence" value="ECO:0007669"/>
    <property type="project" value="UniProtKB-UniRule"/>
</dbReference>
<dbReference type="GO" id="GO:0000395">
    <property type="term" value="P:mRNA 5'-splice site recognition"/>
    <property type="evidence" value="ECO:0000318"/>
    <property type="project" value="GO_Central"/>
</dbReference>
<dbReference type="GO" id="GO:0000381">
    <property type="term" value="P:regulation of alternative mRNA splicing, via spliceosome"/>
    <property type="evidence" value="ECO:0000315"/>
    <property type="project" value="ZFIN"/>
</dbReference>
<dbReference type="GO" id="GO:0000387">
    <property type="term" value="P:spliceosomal snRNP assembly"/>
    <property type="evidence" value="ECO:0007669"/>
    <property type="project" value="UniProtKB-UniRule"/>
</dbReference>
<dbReference type="FunFam" id="3.30.160.60:FF:000059">
    <property type="entry name" value="U1 small nuclear ribonucleoprotein C"/>
    <property type="match status" value="1"/>
</dbReference>
<dbReference type="Gene3D" id="3.30.160.60">
    <property type="entry name" value="Classic Zinc Finger"/>
    <property type="match status" value="1"/>
</dbReference>
<dbReference type="HAMAP" id="MF_03153">
    <property type="entry name" value="U1_C"/>
    <property type="match status" value="1"/>
</dbReference>
<dbReference type="InterPro" id="IPR000690">
    <property type="entry name" value="Matrin/U1-C_Znf_C2H2"/>
</dbReference>
<dbReference type="InterPro" id="IPR003604">
    <property type="entry name" value="Matrin/U1-like-C_Znf_C2H2"/>
</dbReference>
<dbReference type="InterPro" id="IPR013085">
    <property type="entry name" value="U1-CZ_Znf_C2H2"/>
</dbReference>
<dbReference type="InterPro" id="IPR017340">
    <property type="entry name" value="U1_snRNP-C"/>
</dbReference>
<dbReference type="InterPro" id="IPR036236">
    <property type="entry name" value="Znf_C2H2_sf"/>
</dbReference>
<dbReference type="PANTHER" id="PTHR31148">
    <property type="entry name" value="U1 SMALL NUCLEAR RIBONUCLEOPROTEIN C"/>
    <property type="match status" value="1"/>
</dbReference>
<dbReference type="PANTHER" id="PTHR31148:SF1">
    <property type="entry name" value="U1 SMALL NUCLEAR RIBONUCLEOPROTEIN C"/>
    <property type="match status" value="1"/>
</dbReference>
<dbReference type="Pfam" id="PF06220">
    <property type="entry name" value="zf-U1"/>
    <property type="match status" value="1"/>
</dbReference>
<dbReference type="PIRSF" id="PIRSF037969">
    <property type="entry name" value="U1_snRNP-C"/>
    <property type="match status" value="1"/>
</dbReference>
<dbReference type="SMART" id="SM00451">
    <property type="entry name" value="ZnF_U1"/>
    <property type="match status" value="1"/>
</dbReference>
<dbReference type="SUPFAM" id="SSF57667">
    <property type="entry name" value="beta-beta-alpha zinc fingers"/>
    <property type="match status" value="1"/>
</dbReference>
<dbReference type="PROSITE" id="PS50171">
    <property type="entry name" value="ZF_MATRIN"/>
    <property type="match status" value="1"/>
</dbReference>
<protein>
    <recommendedName>
        <fullName evidence="1">U1 small nuclear ribonucleoprotein C</fullName>
        <shortName evidence="1">U1 snRNP C</shortName>
        <shortName evidence="1">U1-C</shortName>
        <shortName evidence="1">U1C</shortName>
    </recommendedName>
</protein>
<gene>
    <name evidence="1" type="primary">snrpc</name>
</gene>
<name>RU1C_DANRE</name>